<sequence length="500" mass="55534">MDSSSFIQFDVPEYSSTVLSQLNELRLQGKLCDIIVHIQGQPFRAHKAVLAASSPYFRDHSALSTMSGLSISVIKNPNVFEQLLSFCYTGRMSLQLKDVVSFLTAASFLQMQCVIDKCTQILESIHSKISVGDVDSVTVGAEENPESRNGVKDSSFFANPVEISPPYCSQGRQPTASSDLRMETTPSKALRSRLQEEGHSDRGSSGSVSEYEIQIEGDHEQGDLLVRESQITEVKVKMEKSDRPSCSDSSSLGDDGYHTEMVDGEQVVAVNVGSYGSVLQHAYSYSQAASQPTNVSEAFGSLSNSSPSRSMLSCFRGGRARQKRALSVHLHSDLQGLVQGSDSEAMMNNPGYESSPRERSARGHWYPYNERLICIYCGKSFNQKGSLDRHMRLHMGITPFVCKFCGKKYTRKDQLEYHIRGHTDDKPFRCEICGKCFPFQGTLNQHLRKNHPGVAEVRSRIESPERTDVYVEQKLENDASASEMGLDSRMEIHTVSDAPD</sequence>
<protein>
    <recommendedName>
        <fullName>Zinc finger and BTB domain-containing protein 34</fullName>
    </recommendedName>
</protein>
<name>ZBT34_HUMAN</name>
<evidence type="ECO:0000255" key="1">
    <source>
        <dbReference type="PROSITE-ProRule" id="PRU00037"/>
    </source>
</evidence>
<evidence type="ECO:0000255" key="2">
    <source>
        <dbReference type="PROSITE-ProRule" id="PRU00042"/>
    </source>
</evidence>
<evidence type="ECO:0000256" key="3">
    <source>
        <dbReference type="SAM" id="MobiDB-lite"/>
    </source>
</evidence>
<evidence type="ECO:0000269" key="4">
    <source>
    </source>
</evidence>
<evidence type="ECO:0000305" key="5"/>
<evidence type="ECO:0007744" key="6">
    <source>
    </source>
</evidence>
<evidence type="ECO:0007744" key="7">
    <source>
    </source>
</evidence>
<accession>Q8NCN2</accession>
<accession>Q38IA7</accession>
<accession>Q5VYE9</accession>
<gene>
    <name type="primary">ZBTB34</name>
    <name type="synonym">KIAA1993</name>
</gene>
<organism>
    <name type="scientific">Homo sapiens</name>
    <name type="common">Human</name>
    <dbReference type="NCBI Taxonomy" id="9606"/>
    <lineage>
        <taxon>Eukaryota</taxon>
        <taxon>Metazoa</taxon>
        <taxon>Chordata</taxon>
        <taxon>Craniata</taxon>
        <taxon>Vertebrata</taxon>
        <taxon>Euteleostomi</taxon>
        <taxon>Mammalia</taxon>
        <taxon>Eutheria</taxon>
        <taxon>Euarchontoglires</taxon>
        <taxon>Primates</taxon>
        <taxon>Haplorrhini</taxon>
        <taxon>Catarrhini</taxon>
        <taxon>Hominidae</taxon>
        <taxon>Homo</taxon>
    </lineage>
</organism>
<keyword id="KW-0238">DNA-binding</keyword>
<keyword id="KW-1017">Isopeptide bond</keyword>
<keyword id="KW-0479">Metal-binding</keyword>
<keyword id="KW-0539">Nucleus</keyword>
<keyword id="KW-0597">Phosphoprotein</keyword>
<keyword id="KW-1267">Proteomics identification</keyword>
<keyword id="KW-1185">Reference proteome</keyword>
<keyword id="KW-0677">Repeat</keyword>
<keyword id="KW-0804">Transcription</keyword>
<keyword id="KW-0805">Transcription regulation</keyword>
<keyword id="KW-0832">Ubl conjugation</keyword>
<keyword id="KW-0862">Zinc</keyword>
<keyword id="KW-0863">Zinc-finger</keyword>
<proteinExistence type="evidence at protein level"/>
<feature type="chain" id="PRO_0000047740" description="Zinc finger and BTB domain-containing protein 34">
    <location>
        <begin position="1"/>
        <end position="500"/>
    </location>
</feature>
<feature type="domain" description="BTB" evidence="1">
    <location>
        <begin position="32"/>
        <end position="96"/>
    </location>
</feature>
<feature type="zinc finger region" description="C2H2-type 1" evidence="2">
    <location>
        <begin position="372"/>
        <end position="394"/>
    </location>
</feature>
<feature type="zinc finger region" description="C2H2-type 2" evidence="2">
    <location>
        <begin position="400"/>
        <end position="422"/>
    </location>
</feature>
<feature type="zinc finger region" description="C2H2-type 3" evidence="2">
    <location>
        <begin position="428"/>
        <end position="451"/>
    </location>
</feature>
<feature type="region of interest" description="Disordered" evidence="3">
    <location>
        <begin position="164"/>
        <end position="209"/>
    </location>
</feature>
<feature type="region of interest" description="Disordered" evidence="3">
    <location>
        <begin position="236"/>
        <end position="256"/>
    </location>
</feature>
<feature type="region of interest" description="Disordered" evidence="3">
    <location>
        <begin position="341"/>
        <end position="360"/>
    </location>
</feature>
<feature type="region of interest" description="Disordered" evidence="3">
    <location>
        <begin position="478"/>
        <end position="500"/>
    </location>
</feature>
<feature type="compositionally biased region" description="Basic and acidic residues" evidence="3">
    <location>
        <begin position="193"/>
        <end position="202"/>
    </location>
</feature>
<feature type="compositionally biased region" description="Basic and acidic residues" evidence="3">
    <location>
        <begin position="236"/>
        <end position="245"/>
    </location>
</feature>
<feature type="modified residue" description="Phosphoserine" evidence="6">
    <location>
        <position position="164"/>
    </location>
</feature>
<feature type="modified residue" description="Phosphoserine" evidence="6">
    <location>
        <position position="463"/>
    </location>
</feature>
<feature type="cross-link" description="Glycyl lysine isopeptide (Lys-Gly) (interchain with G-Cter in SUMO2)" evidence="7">
    <location>
        <position position="235"/>
    </location>
</feature>
<feature type="cross-link" description="Glycyl lysine isopeptide (Lys-Gly) (interchain with G-Cter in SUMO2)" evidence="7">
    <location>
        <position position="237"/>
    </location>
</feature>
<feature type="cross-link" description="Glycyl lysine isopeptide (Lys-Gly) (interchain with G-Cter in SUMO2)" evidence="7">
    <location>
        <position position="426"/>
    </location>
</feature>
<feature type="cross-link" description="Glycyl lysine isopeptide (Lys-Gly) (interchain with G-Cter in SUMO2)" evidence="7">
    <location>
        <position position="474"/>
    </location>
</feature>
<comment type="function">
    <text evidence="4">May be a transcriptional repressor.</text>
</comment>
<comment type="interaction">
    <interactant intactId="EBI-11317716">
        <id>Q8NCN2</id>
    </interactant>
    <interactant intactId="EBI-1642333">
        <id>Q9BYV9</id>
        <label>BACH2</label>
    </interactant>
    <organismsDiffer>false</organismsDiffer>
    <experiments>4</experiments>
</comment>
<comment type="interaction">
    <interactant intactId="EBI-11317716">
        <id>Q8NCN2</id>
    </interactant>
    <interactant intactId="EBI-473160">
        <id>Q8N2W9</id>
        <label>PIAS4</label>
    </interactant>
    <organismsDiffer>false</organismsDiffer>
    <experiments>3</experiments>
</comment>
<comment type="interaction">
    <interactant intactId="EBI-11317716">
        <id>Q8NCN2</id>
    </interactant>
    <interactant intactId="EBI-2340927">
        <id>P78317</id>
        <label>RNF4</label>
    </interactant>
    <organismsDiffer>false</organismsDiffer>
    <experiments>3</experiments>
</comment>
<comment type="interaction">
    <interactant intactId="EBI-11317716">
        <id>Q8NCN2</id>
    </interactant>
    <interactant intactId="EBI-12842466">
        <id>Q9Y2W6</id>
        <label>TDRKH</label>
    </interactant>
    <organismsDiffer>false</organismsDiffer>
    <experiments>4</experiments>
</comment>
<comment type="interaction">
    <interactant intactId="EBI-11317716">
        <id>Q8NCN2</id>
    </interactant>
    <interactant intactId="EBI-3918996">
        <id>Q9HCK0</id>
        <label>ZBTB26</label>
    </interactant>
    <organismsDiffer>false</organismsDiffer>
    <experiments>3</experiments>
</comment>
<comment type="subcellular location">
    <subcellularLocation>
        <location evidence="4">Nucleus</location>
    </subcellularLocation>
</comment>
<comment type="tissue specificity">
    <text evidence="4">Expressed in several tissues, including heart, brain, thymus, skeletal muscle, small intestine, testis, kidney, placenta, peripheral blood cells and adult and fetal liver.</text>
</comment>
<comment type="sequence caution" evidence="5">
    <conflict type="erroneous initiation">
        <sequence resource="EMBL-CDS" id="ABA86591"/>
    </conflict>
    <text>Extended N-terminus.</text>
</comment>
<comment type="sequence caution" evidence="5">
    <conflict type="erroneous initiation">
        <sequence resource="EMBL-CDS" id="BAC02702"/>
    </conflict>
    <text>Extended N-terminus.</text>
</comment>
<reference key="1">
    <citation type="journal article" date="2006" name="Mol. Cell. Biochem.">
        <title>ZBTB34, a novel human BTB/POZ zinc finger protein, is a potential transcriptional repressor.</title>
        <authorList>
            <person name="Qi J."/>
            <person name="Zhang X."/>
            <person name="Zhang H.-K."/>
            <person name="Yang H.-M."/>
            <person name="Zhou Y.-B."/>
            <person name="Han Z.-G."/>
        </authorList>
    </citation>
    <scope>NUCLEOTIDE SEQUENCE [MRNA]</scope>
    <scope>FUNCTION</scope>
    <scope>SUBCELLULAR LOCATION</scope>
    <scope>TISSUE SPECIFICITY</scope>
</reference>
<reference key="2">
    <citation type="journal article" date="2002" name="DNA Res.">
        <title>Characterization of size-fractionated cDNA libraries generated by the in vitro recombination-assisted method.</title>
        <authorList>
            <person name="Ohara O."/>
            <person name="Nagase T."/>
            <person name="Mitsui G."/>
            <person name="Kohga H."/>
            <person name="Kikuno R."/>
            <person name="Hiraoka S."/>
            <person name="Takahashi Y."/>
            <person name="Kitajima S."/>
            <person name="Saga Y."/>
            <person name="Koseki H."/>
        </authorList>
    </citation>
    <scope>NUCLEOTIDE SEQUENCE [LARGE SCALE MRNA]</scope>
    <source>
        <tissue>Brain</tissue>
    </source>
</reference>
<reference key="3">
    <citation type="journal article" date="2004" name="Nature">
        <title>DNA sequence and analysis of human chromosome 9.</title>
        <authorList>
            <person name="Humphray S.J."/>
            <person name="Oliver K."/>
            <person name="Hunt A.R."/>
            <person name="Plumb R.W."/>
            <person name="Loveland J.E."/>
            <person name="Howe K.L."/>
            <person name="Andrews T.D."/>
            <person name="Searle S."/>
            <person name="Hunt S.E."/>
            <person name="Scott C.E."/>
            <person name="Jones M.C."/>
            <person name="Ainscough R."/>
            <person name="Almeida J.P."/>
            <person name="Ambrose K.D."/>
            <person name="Ashwell R.I.S."/>
            <person name="Babbage A.K."/>
            <person name="Babbage S."/>
            <person name="Bagguley C.L."/>
            <person name="Bailey J."/>
            <person name="Banerjee R."/>
            <person name="Barker D.J."/>
            <person name="Barlow K.F."/>
            <person name="Bates K."/>
            <person name="Beasley H."/>
            <person name="Beasley O."/>
            <person name="Bird C.P."/>
            <person name="Bray-Allen S."/>
            <person name="Brown A.J."/>
            <person name="Brown J.Y."/>
            <person name="Burford D."/>
            <person name="Burrill W."/>
            <person name="Burton J."/>
            <person name="Carder C."/>
            <person name="Carter N.P."/>
            <person name="Chapman J.C."/>
            <person name="Chen Y."/>
            <person name="Clarke G."/>
            <person name="Clark S.Y."/>
            <person name="Clee C.M."/>
            <person name="Clegg S."/>
            <person name="Collier R.E."/>
            <person name="Corby N."/>
            <person name="Crosier M."/>
            <person name="Cummings A.T."/>
            <person name="Davies J."/>
            <person name="Dhami P."/>
            <person name="Dunn M."/>
            <person name="Dutta I."/>
            <person name="Dyer L.W."/>
            <person name="Earthrowl M.E."/>
            <person name="Faulkner L."/>
            <person name="Fleming C.J."/>
            <person name="Frankish A."/>
            <person name="Frankland J.A."/>
            <person name="French L."/>
            <person name="Fricker D.G."/>
            <person name="Garner P."/>
            <person name="Garnett J."/>
            <person name="Ghori J."/>
            <person name="Gilbert J.G.R."/>
            <person name="Glison C."/>
            <person name="Grafham D.V."/>
            <person name="Gribble S."/>
            <person name="Griffiths C."/>
            <person name="Griffiths-Jones S."/>
            <person name="Grocock R."/>
            <person name="Guy J."/>
            <person name="Hall R.E."/>
            <person name="Hammond S."/>
            <person name="Harley J.L."/>
            <person name="Harrison E.S.I."/>
            <person name="Hart E.A."/>
            <person name="Heath P.D."/>
            <person name="Henderson C.D."/>
            <person name="Hopkins B.L."/>
            <person name="Howard P.J."/>
            <person name="Howden P.J."/>
            <person name="Huckle E."/>
            <person name="Johnson C."/>
            <person name="Johnson D."/>
            <person name="Joy A.A."/>
            <person name="Kay M."/>
            <person name="Keenan S."/>
            <person name="Kershaw J.K."/>
            <person name="Kimberley A.M."/>
            <person name="King A."/>
            <person name="Knights A."/>
            <person name="Laird G.K."/>
            <person name="Langford C."/>
            <person name="Lawlor S."/>
            <person name="Leongamornlert D.A."/>
            <person name="Leversha M."/>
            <person name="Lloyd C."/>
            <person name="Lloyd D.M."/>
            <person name="Lovell J."/>
            <person name="Martin S."/>
            <person name="Mashreghi-Mohammadi M."/>
            <person name="Matthews L."/>
            <person name="McLaren S."/>
            <person name="McLay K.E."/>
            <person name="McMurray A."/>
            <person name="Milne S."/>
            <person name="Nickerson T."/>
            <person name="Nisbett J."/>
            <person name="Nordsiek G."/>
            <person name="Pearce A.V."/>
            <person name="Peck A.I."/>
            <person name="Porter K.M."/>
            <person name="Pandian R."/>
            <person name="Pelan S."/>
            <person name="Phillimore B."/>
            <person name="Povey S."/>
            <person name="Ramsey Y."/>
            <person name="Rand V."/>
            <person name="Scharfe M."/>
            <person name="Sehra H.K."/>
            <person name="Shownkeen R."/>
            <person name="Sims S.K."/>
            <person name="Skuce C.D."/>
            <person name="Smith M."/>
            <person name="Steward C.A."/>
            <person name="Swarbreck D."/>
            <person name="Sycamore N."/>
            <person name="Tester J."/>
            <person name="Thorpe A."/>
            <person name="Tracey A."/>
            <person name="Tromans A."/>
            <person name="Thomas D.W."/>
            <person name="Wall M."/>
            <person name="Wallis J.M."/>
            <person name="West A.P."/>
            <person name="Whitehead S.L."/>
            <person name="Willey D.L."/>
            <person name="Williams S.A."/>
            <person name="Wilming L."/>
            <person name="Wray P.W."/>
            <person name="Young L."/>
            <person name="Ashurst J.L."/>
            <person name="Coulson A."/>
            <person name="Blocker H."/>
            <person name="Durbin R.M."/>
            <person name="Sulston J.E."/>
            <person name="Hubbard T."/>
            <person name="Jackson M.J."/>
            <person name="Bentley D.R."/>
            <person name="Beck S."/>
            <person name="Rogers J."/>
            <person name="Dunham I."/>
        </authorList>
    </citation>
    <scope>NUCLEOTIDE SEQUENCE [LARGE SCALE GENOMIC DNA]</scope>
</reference>
<reference key="4">
    <citation type="journal article" date="2013" name="J. Proteome Res.">
        <title>Toward a comprehensive characterization of a human cancer cell phosphoproteome.</title>
        <authorList>
            <person name="Zhou H."/>
            <person name="Di Palma S."/>
            <person name="Preisinger C."/>
            <person name="Peng M."/>
            <person name="Polat A.N."/>
            <person name="Heck A.J."/>
            <person name="Mohammed S."/>
        </authorList>
    </citation>
    <scope>PHOSPHORYLATION [LARGE SCALE ANALYSIS] AT SER-164 AND SER-463</scope>
    <scope>IDENTIFICATION BY MASS SPECTROMETRY [LARGE SCALE ANALYSIS]</scope>
    <source>
        <tissue>Cervix carcinoma</tissue>
        <tissue>Erythroleukemia</tissue>
    </source>
</reference>
<reference key="5">
    <citation type="journal article" date="2017" name="Nat. Struct. Mol. Biol.">
        <title>Site-specific mapping of the human SUMO proteome reveals co-modification with phosphorylation.</title>
        <authorList>
            <person name="Hendriks I.A."/>
            <person name="Lyon D."/>
            <person name="Young C."/>
            <person name="Jensen L.J."/>
            <person name="Vertegaal A.C."/>
            <person name="Nielsen M.L."/>
        </authorList>
    </citation>
    <scope>SUMOYLATION [LARGE SCALE ANALYSIS] AT LYS-235; LYS-237; LYS-426 AND LYS-474</scope>
    <scope>IDENTIFICATION BY MASS SPECTROMETRY [LARGE SCALE ANALYSIS]</scope>
</reference>
<dbReference type="EMBL" id="DQ227306">
    <property type="protein sequence ID" value="ABA86591.1"/>
    <property type="status" value="ALT_INIT"/>
    <property type="molecule type" value="mRNA"/>
</dbReference>
<dbReference type="EMBL" id="AB082524">
    <property type="protein sequence ID" value="BAC02702.1"/>
    <property type="status" value="ALT_INIT"/>
    <property type="molecule type" value="mRNA"/>
</dbReference>
<dbReference type="EMBL" id="AL354944">
    <property type="status" value="NOT_ANNOTATED_CDS"/>
    <property type="molecule type" value="Genomic_DNA"/>
</dbReference>
<dbReference type="RefSeq" id="NP_001092740.1">
    <property type="nucleotide sequence ID" value="NM_001099270.1"/>
</dbReference>
<dbReference type="RefSeq" id="XP_011517001.1">
    <property type="nucleotide sequence ID" value="XM_011518699.2"/>
</dbReference>
<dbReference type="SMR" id="Q8NCN2"/>
<dbReference type="BioGRID" id="135630">
    <property type="interactions" value="30"/>
</dbReference>
<dbReference type="FunCoup" id="Q8NCN2">
    <property type="interactions" value="1795"/>
</dbReference>
<dbReference type="IntAct" id="Q8NCN2">
    <property type="interactions" value="35"/>
</dbReference>
<dbReference type="MINT" id="Q8NCN2"/>
<dbReference type="STRING" id="9606.ENSP00000362551"/>
<dbReference type="iPTMnet" id="Q8NCN2"/>
<dbReference type="PhosphoSitePlus" id="Q8NCN2"/>
<dbReference type="BioMuta" id="ZBTB34"/>
<dbReference type="DMDM" id="308153674"/>
<dbReference type="jPOST" id="Q8NCN2"/>
<dbReference type="MassIVE" id="Q8NCN2"/>
<dbReference type="PaxDb" id="9606-ENSP00000362551"/>
<dbReference type="ProteomicsDB" id="72912"/>
<dbReference type="Pumba" id="Q8NCN2"/>
<dbReference type="Antibodypedia" id="7766">
    <property type="antibodies" value="40 antibodies from 12 providers"/>
</dbReference>
<dbReference type="DNASU" id="403341"/>
<dbReference type="GeneID" id="403341"/>
<dbReference type="KEGG" id="hsa:403341"/>
<dbReference type="UCSC" id="uc004bqm.5">
    <property type="organism name" value="human"/>
</dbReference>
<dbReference type="AGR" id="HGNC:31446"/>
<dbReference type="CTD" id="403341"/>
<dbReference type="DisGeNET" id="403341"/>
<dbReference type="GeneCards" id="ZBTB34"/>
<dbReference type="HGNC" id="HGNC:31446">
    <property type="gene designation" value="ZBTB34"/>
</dbReference>
<dbReference type="MIM" id="611692">
    <property type="type" value="gene"/>
</dbReference>
<dbReference type="neXtProt" id="NX_Q8NCN2"/>
<dbReference type="PharmGKB" id="PA134869916"/>
<dbReference type="VEuPathDB" id="HostDB:ENSG00000177125"/>
<dbReference type="eggNOG" id="KOG1721">
    <property type="taxonomic scope" value="Eukaryota"/>
</dbReference>
<dbReference type="HOGENOM" id="CLU_029118_2_0_1"/>
<dbReference type="InParanoid" id="Q8NCN2"/>
<dbReference type="OrthoDB" id="10261408at2759"/>
<dbReference type="PAN-GO" id="Q8NCN2">
    <property type="GO annotations" value="4 GO annotations based on evolutionary models"/>
</dbReference>
<dbReference type="PhylomeDB" id="Q8NCN2"/>
<dbReference type="TreeFam" id="TF331184"/>
<dbReference type="PathwayCommons" id="Q8NCN2"/>
<dbReference type="SignaLink" id="Q8NCN2"/>
<dbReference type="BioGRID-ORCS" id="403341">
    <property type="hits" value="15 hits in 1184 CRISPR screens"/>
</dbReference>
<dbReference type="GenomeRNAi" id="403341"/>
<dbReference type="Pharos" id="Q8NCN2">
    <property type="development level" value="Tdark"/>
</dbReference>
<dbReference type="PRO" id="PR:Q8NCN2"/>
<dbReference type="Proteomes" id="UP000005640">
    <property type="component" value="Chromosome 9"/>
</dbReference>
<dbReference type="RNAct" id="Q8NCN2">
    <property type="molecule type" value="protein"/>
</dbReference>
<dbReference type="Bgee" id="ENSG00000177125">
    <property type="expression patterns" value="Expressed in amniotic fluid and 182 other cell types or tissues"/>
</dbReference>
<dbReference type="ExpressionAtlas" id="Q8NCN2">
    <property type="expression patterns" value="baseline and differential"/>
</dbReference>
<dbReference type="GO" id="GO:0000785">
    <property type="term" value="C:chromatin"/>
    <property type="evidence" value="ECO:0000247"/>
    <property type="project" value="NTNU_SB"/>
</dbReference>
<dbReference type="GO" id="GO:0005654">
    <property type="term" value="C:nucleoplasm"/>
    <property type="evidence" value="ECO:0000318"/>
    <property type="project" value="GO_Central"/>
</dbReference>
<dbReference type="GO" id="GO:0000981">
    <property type="term" value="F:DNA-binding transcription factor activity, RNA polymerase II-specific"/>
    <property type="evidence" value="ECO:0000247"/>
    <property type="project" value="NTNU_SB"/>
</dbReference>
<dbReference type="GO" id="GO:0001227">
    <property type="term" value="F:DNA-binding transcription repressor activity, RNA polymerase II-specific"/>
    <property type="evidence" value="ECO:0000318"/>
    <property type="project" value="GO_Central"/>
</dbReference>
<dbReference type="GO" id="GO:0000978">
    <property type="term" value="F:RNA polymerase II cis-regulatory region sequence-specific DNA binding"/>
    <property type="evidence" value="ECO:0000318"/>
    <property type="project" value="GO_Central"/>
</dbReference>
<dbReference type="GO" id="GO:0008270">
    <property type="term" value="F:zinc ion binding"/>
    <property type="evidence" value="ECO:0007669"/>
    <property type="project" value="UniProtKB-KW"/>
</dbReference>
<dbReference type="GO" id="GO:0000122">
    <property type="term" value="P:negative regulation of transcription by RNA polymerase II"/>
    <property type="evidence" value="ECO:0000318"/>
    <property type="project" value="GO_Central"/>
</dbReference>
<dbReference type="GO" id="GO:0001817">
    <property type="term" value="P:regulation of cytokine production"/>
    <property type="evidence" value="ECO:0000318"/>
    <property type="project" value="GO_Central"/>
</dbReference>
<dbReference type="GO" id="GO:0002682">
    <property type="term" value="P:regulation of immune system process"/>
    <property type="evidence" value="ECO:0000318"/>
    <property type="project" value="GO_Central"/>
</dbReference>
<dbReference type="CDD" id="cd18220">
    <property type="entry name" value="BTB_POZ_ZBTB34"/>
    <property type="match status" value="1"/>
</dbReference>
<dbReference type="FunFam" id="3.30.160.60:FF:000119">
    <property type="entry name" value="Zinc finger and BTB domain containing 37"/>
    <property type="match status" value="1"/>
</dbReference>
<dbReference type="FunFam" id="3.30.160.60:FF:000422">
    <property type="entry name" value="Zinc finger and BTB domain containing 37"/>
    <property type="match status" value="1"/>
</dbReference>
<dbReference type="FunFam" id="3.30.710.10:FF:000009">
    <property type="entry name" value="Zinc finger and BTB domain-containing 37"/>
    <property type="match status" value="1"/>
</dbReference>
<dbReference type="FunFam" id="3.30.160.60:FF:000364">
    <property type="entry name" value="Zinc finger and BTB domain-containing protein 34"/>
    <property type="match status" value="1"/>
</dbReference>
<dbReference type="Gene3D" id="3.30.160.60">
    <property type="entry name" value="Classic Zinc Finger"/>
    <property type="match status" value="3"/>
</dbReference>
<dbReference type="Gene3D" id="3.30.710.10">
    <property type="entry name" value="Potassium Channel Kv1.1, Chain A"/>
    <property type="match status" value="1"/>
</dbReference>
<dbReference type="InterPro" id="IPR000210">
    <property type="entry name" value="BTB/POZ_dom"/>
</dbReference>
<dbReference type="InterPro" id="IPR011333">
    <property type="entry name" value="SKP1/BTB/POZ_sf"/>
</dbReference>
<dbReference type="InterPro" id="IPR036236">
    <property type="entry name" value="Znf_C2H2_sf"/>
</dbReference>
<dbReference type="InterPro" id="IPR013087">
    <property type="entry name" value="Znf_C2H2_type"/>
</dbReference>
<dbReference type="InterPro" id="IPR050457">
    <property type="entry name" value="ZnFinger_BTB_dom_contain"/>
</dbReference>
<dbReference type="PANTHER" id="PTHR46105">
    <property type="entry name" value="AGAP004733-PA"/>
    <property type="match status" value="1"/>
</dbReference>
<dbReference type="PANTHER" id="PTHR46105:SF26">
    <property type="entry name" value="ZINC FINGER AND BTB DOMAIN CONTAINING 34"/>
    <property type="match status" value="1"/>
</dbReference>
<dbReference type="Pfam" id="PF00651">
    <property type="entry name" value="BTB"/>
    <property type="match status" value="1"/>
</dbReference>
<dbReference type="Pfam" id="PF00096">
    <property type="entry name" value="zf-C2H2"/>
    <property type="match status" value="2"/>
</dbReference>
<dbReference type="Pfam" id="PF13894">
    <property type="entry name" value="zf-C2H2_4"/>
    <property type="match status" value="1"/>
</dbReference>
<dbReference type="SMART" id="SM00225">
    <property type="entry name" value="BTB"/>
    <property type="match status" value="1"/>
</dbReference>
<dbReference type="SMART" id="SM00355">
    <property type="entry name" value="ZnF_C2H2"/>
    <property type="match status" value="3"/>
</dbReference>
<dbReference type="SUPFAM" id="SSF57667">
    <property type="entry name" value="beta-beta-alpha zinc fingers"/>
    <property type="match status" value="2"/>
</dbReference>
<dbReference type="SUPFAM" id="SSF54695">
    <property type="entry name" value="POZ domain"/>
    <property type="match status" value="1"/>
</dbReference>
<dbReference type="PROSITE" id="PS50097">
    <property type="entry name" value="BTB"/>
    <property type="match status" value="1"/>
</dbReference>
<dbReference type="PROSITE" id="PS00028">
    <property type="entry name" value="ZINC_FINGER_C2H2_1"/>
    <property type="match status" value="3"/>
</dbReference>
<dbReference type="PROSITE" id="PS50157">
    <property type="entry name" value="ZINC_FINGER_C2H2_2"/>
    <property type="match status" value="3"/>
</dbReference>